<keyword id="KW-0687">Ribonucleoprotein</keyword>
<keyword id="KW-0689">Ribosomal protein</keyword>
<keyword id="KW-0694">RNA-binding</keyword>
<keyword id="KW-0699">rRNA-binding</keyword>
<evidence type="ECO:0000255" key="1">
    <source>
        <dbReference type="HAMAP-Rule" id="MF_00531"/>
    </source>
</evidence>
<evidence type="ECO:0000305" key="2"/>
<organism>
    <name type="scientific">Borrelia duttonii (strain Ly)</name>
    <dbReference type="NCBI Taxonomy" id="412419"/>
    <lineage>
        <taxon>Bacteria</taxon>
        <taxon>Pseudomonadati</taxon>
        <taxon>Spirochaetota</taxon>
        <taxon>Spirochaetia</taxon>
        <taxon>Spirochaetales</taxon>
        <taxon>Borreliaceae</taxon>
        <taxon>Borrelia</taxon>
    </lineage>
</organism>
<accession>B5RM40</accession>
<protein>
    <recommendedName>
        <fullName evidence="1">Small ribosomal subunit protein uS19</fullName>
    </recommendedName>
    <alternativeName>
        <fullName evidence="2">30S ribosomal protein S19</fullName>
    </alternativeName>
</protein>
<reference key="1">
    <citation type="journal article" date="2008" name="PLoS Genet.">
        <title>The genome of Borrelia recurrentis, the agent of deadly louse-borne relapsing fever, is a degraded subset of tick-borne Borrelia duttonii.</title>
        <authorList>
            <person name="Lescot M."/>
            <person name="Audic S."/>
            <person name="Robert C."/>
            <person name="Nguyen T.T."/>
            <person name="Blanc G."/>
            <person name="Cutler S.J."/>
            <person name="Wincker P."/>
            <person name="Couloux A."/>
            <person name="Claverie J.-M."/>
            <person name="Raoult D."/>
            <person name="Drancourt M."/>
        </authorList>
    </citation>
    <scope>NUCLEOTIDE SEQUENCE [LARGE SCALE GENOMIC DNA]</scope>
    <source>
        <strain>Ly</strain>
    </source>
</reference>
<sequence length="92" mass="10361">MARSIKKGPFIEKSLYQKVLASSGKEKRVVIKTYSRTSTIIPEMVSLTISVYNGKSFIPVYITEDLVGHKLGEFSPTRIFRGHAKSDKKGRK</sequence>
<comment type="function">
    <text evidence="1">Protein S19 forms a complex with S13 that binds strongly to the 16S ribosomal RNA.</text>
</comment>
<comment type="similarity">
    <text evidence="1">Belongs to the universal ribosomal protein uS19 family.</text>
</comment>
<feature type="chain" id="PRO_1000127933" description="Small ribosomal subunit protein uS19">
    <location>
        <begin position="1"/>
        <end position="92"/>
    </location>
</feature>
<proteinExistence type="inferred from homology"/>
<gene>
    <name evidence="1" type="primary">rpsS</name>
    <name type="ordered locus">BDU_485</name>
</gene>
<name>RS19_BORDL</name>
<dbReference type="EMBL" id="CP000976">
    <property type="protein sequence ID" value="ACH93426.1"/>
    <property type="molecule type" value="Genomic_DNA"/>
</dbReference>
<dbReference type="RefSeq" id="WP_012538236.1">
    <property type="nucleotide sequence ID" value="NC_011229.1"/>
</dbReference>
<dbReference type="SMR" id="B5RM40"/>
<dbReference type="STRING" id="412419.BDU_485"/>
<dbReference type="KEGG" id="bdu:BDU_485"/>
<dbReference type="eggNOG" id="COG0185">
    <property type="taxonomic scope" value="Bacteria"/>
</dbReference>
<dbReference type="HOGENOM" id="CLU_144911_0_1_12"/>
<dbReference type="OrthoDB" id="9797833at2"/>
<dbReference type="Proteomes" id="UP000000611">
    <property type="component" value="Chromosome"/>
</dbReference>
<dbReference type="GO" id="GO:0005737">
    <property type="term" value="C:cytoplasm"/>
    <property type="evidence" value="ECO:0007669"/>
    <property type="project" value="UniProtKB-ARBA"/>
</dbReference>
<dbReference type="GO" id="GO:0015935">
    <property type="term" value="C:small ribosomal subunit"/>
    <property type="evidence" value="ECO:0007669"/>
    <property type="project" value="InterPro"/>
</dbReference>
<dbReference type="GO" id="GO:0019843">
    <property type="term" value="F:rRNA binding"/>
    <property type="evidence" value="ECO:0007669"/>
    <property type="project" value="UniProtKB-UniRule"/>
</dbReference>
<dbReference type="GO" id="GO:0003735">
    <property type="term" value="F:structural constituent of ribosome"/>
    <property type="evidence" value="ECO:0007669"/>
    <property type="project" value="InterPro"/>
</dbReference>
<dbReference type="GO" id="GO:0000028">
    <property type="term" value="P:ribosomal small subunit assembly"/>
    <property type="evidence" value="ECO:0007669"/>
    <property type="project" value="TreeGrafter"/>
</dbReference>
<dbReference type="GO" id="GO:0006412">
    <property type="term" value="P:translation"/>
    <property type="evidence" value="ECO:0007669"/>
    <property type="project" value="UniProtKB-UniRule"/>
</dbReference>
<dbReference type="FunFam" id="3.30.860.10:FF:000001">
    <property type="entry name" value="30S ribosomal protein S19"/>
    <property type="match status" value="1"/>
</dbReference>
<dbReference type="Gene3D" id="3.30.860.10">
    <property type="entry name" value="30s Ribosomal Protein S19, Chain A"/>
    <property type="match status" value="1"/>
</dbReference>
<dbReference type="HAMAP" id="MF_00531">
    <property type="entry name" value="Ribosomal_uS19"/>
    <property type="match status" value="1"/>
</dbReference>
<dbReference type="InterPro" id="IPR002222">
    <property type="entry name" value="Ribosomal_uS19"/>
</dbReference>
<dbReference type="InterPro" id="IPR005732">
    <property type="entry name" value="Ribosomal_uS19_bac-type"/>
</dbReference>
<dbReference type="InterPro" id="IPR020934">
    <property type="entry name" value="Ribosomal_uS19_CS"/>
</dbReference>
<dbReference type="InterPro" id="IPR023575">
    <property type="entry name" value="Ribosomal_uS19_SF"/>
</dbReference>
<dbReference type="NCBIfam" id="TIGR01050">
    <property type="entry name" value="rpsS_bact"/>
    <property type="match status" value="1"/>
</dbReference>
<dbReference type="PANTHER" id="PTHR11880">
    <property type="entry name" value="RIBOSOMAL PROTEIN S19P FAMILY MEMBER"/>
    <property type="match status" value="1"/>
</dbReference>
<dbReference type="PANTHER" id="PTHR11880:SF8">
    <property type="entry name" value="SMALL RIBOSOMAL SUBUNIT PROTEIN US19M"/>
    <property type="match status" value="1"/>
</dbReference>
<dbReference type="Pfam" id="PF00203">
    <property type="entry name" value="Ribosomal_S19"/>
    <property type="match status" value="1"/>
</dbReference>
<dbReference type="PIRSF" id="PIRSF002144">
    <property type="entry name" value="Ribosomal_S19"/>
    <property type="match status" value="1"/>
</dbReference>
<dbReference type="PRINTS" id="PR00975">
    <property type="entry name" value="RIBOSOMALS19"/>
</dbReference>
<dbReference type="SUPFAM" id="SSF54570">
    <property type="entry name" value="Ribosomal protein S19"/>
    <property type="match status" value="1"/>
</dbReference>
<dbReference type="PROSITE" id="PS00323">
    <property type="entry name" value="RIBOSOMAL_S19"/>
    <property type="match status" value="1"/>
</dbReference>